<keyword id="KW-0539">Nucleus</keyword>
<keyword id="KW-0597">Phosphoprotein</keyword>
<keyword id="KW-1185">Reference proteome</keyword>
<feature type="chain" id="PRO_0000120229" description="Ribosome production factor 2 homolog">
    <location>
        <begin position="1"/>
        <end position="317"/>
    </location>
</feature>
<feature type="domain" description="Brix" evidence="2">
    <location>
        <begin position="28"/>
        <end position="240"/>
    </location>
</feature>
<feature type="region of interest" description="Disordered" evidence="3">
    <location>
        <begin position="287"/>
        <end position="317"/>
    </location>
</feature>
<feature type="compositionally biased region" description="Acidic residues" evidence="3">
    <location>
        <begin position="296"/>
        <end position="317"/>
    </location>
</feature>
<feature type="modified residue" description="Phosphoserine" evidence="5">
    <location>
        <position position="293"/>
    </location>
</feature>
<feature type="modified residue" description="Phosphoserine" evidence="5">
    <location>
        <position position="300"/>
    </location>
</feature>
<feature type="modified residue" description="Phosphoserine" evidence="5">
    <location>
        <position position="313"/>
    </location>
</feature>
<feature type="modified residue" description="Phosphoserine" evidence="5">
    <location>
        <position position="316"/>
    </location>
</feature>
<organism>
    <name type="scientific">Schizosaccharomyces pombe (strain 972 / ATCC 24843)</name>
    <name type="common">Fission yeast</name>
    <dbReference type="NCBI Taxonomy" id="284812"/>
    <lineage>
        <taxon>Eukaryota</taxon>
        <taxon>Fungi</taxon>
        <taxon>Dikarya</taxon>
        <taxon>Ascomycota</taxon>
        <taxon>Taphrinomycotina</taxon>
        <taxon>Schizosaccharomycetes</taxon>
        <taxon>Schizosaccharomycetales</taxon>
        <taxon>Schizosaccharomycetaceae</taxon>
        <taxon>Schizosaccharomyces</taxon>
    </lineage>
</organism>
<protein>
    <recommendedName>
        <fullName>Ribosome production factor 2 homolog</fullName>
    </recommendedName>
    <alternativeName>
        <fullName>Brix domain-containing protein 1 homolog</fullName>
    </alternativeName>
    <alternativeName>
        <fullName>Ribosome biogenesis protein RPF2 homolog</fullName>
    </alternativeName>
</protein>
<gene>
    <name type="ORF">SPAC926.08c</name>
</gene>
<proteinExistence type="evidence at protein level"/>
<accession>Q9UUG1</accession>
<accession>Q9UU08</accession>
<evidence type="ECO:0000250" key="1">
    <source>
        <dbReference type="UniProtKB" id="P36160"/>
    </source>
</evidence>
<evidence type="ECO:0000255" key="2">
    <source>
        <dbReference type="PROSITE-ProRule" id="PRU00034"/>
    </source>
</evidence>
<evidence type="ECO:0000256" key="3">
    <source>
        <dbReference type="SAM" id="MobiDB-lite"/>
    </source>
</evidence>
<evidence type="ECO:0000269" key="4">
    <source>
    </source>
</evidence>
<evidence type="ECO:0000269" key="5">
    <source>
    </source>
</evidence>
<evidence type="ECO:0000305" key="6"/>
<sequence length="317" mass="36071">MLRQVKPKNARTKRALEKREPKLVEGAKTAIFLRGNATSQISLDVLGDIHALKKPFSVNFQKKNNILPFEDASSLEFFSEKNDAALAVMATHNKKRPHNLTWVRFFNYRVLDMIELGIVNYKSIQSFSATPIVPGTKPMILFQGPVFDAHPTYRHIKSLFLDFFRGEPIQKLDSAGLSYVIVVSAAEAQEDETKPLPLVHFRVYGTKLLKTKTNLPRVELEEMGPRIDFNIRRVQPAESDVLEEALKKPKTQEPKPKKNVDVDIIGNKVGRIHVDQQDLGNLQTRKMKGLKRSVEEREDSENEEVEIEEDVISDASE</sequence>
<reference key="1">
    <citation type="journal article" date="2002" name="Nature">
        <title>The genome sequence of Schizosaccharomyces pombe.</title>
        <authorList>
            <person name="Wood V."/>
            <person name="Gwilliam R."/>
            <person name="Rajandream M.A."/>
            <person name="Lyne M.H."/>
            <person name="Lyne R."/>
            <person name="Stewart A."/>
            <person name="Sgouros J.G."/>
            <person name="Peat N."/>
            <person name="Hayles J."/>
            <person name="Baker S.G."/>
            <person name="Basham D."/>
            <person name="Bowman S."/>
            <person name="Brooks K."/>
            <person name="Brown D."/>
            <person name="Brown S."/>
            <person name="Chillingworth T."/>
            <person name="Churcher C.M."/>
            <person name="Collins M."/>
            <person name="Connor R."/>
            <person name="Cronin A."/>
            <person name="Davis P."/>
            <person name="Feltwell T."/>
            <person name="Fraser A."/>
            <person name="Gentles S."/>
            <person name="Goble A."/>
            <person name="Hamlin N."/>
            <person name="Harris D.E."/>
            <person name="Hidalgo J."/>
            <person name="Hodgson G."/>
            <person name="Holroyd S."/>
            <person name="Hornsby T."/>
            <person name="Howarth S."/>
            <person name="Huckle E.J."/>
            <person name="Hunt S."/>
            <person name="Jagels K."/>
            <person name="James K.D."/>
            <person name="Jones L."/>
            <person name="Jones M."/>
            <person name="Leather S."/>
            <person name="McDonald S."/>
            <person name="McLean J."/>
            <person name="Mooney P."/>
            <person name="Moule S."/>
            <person name="Mungall K.L."/>
            <person name="Murphy L.D."/>
            <person name="Niblett D."/>
            <person name="Odell C."/>
            <person name="Oliver K."/>
            <person name="O'Neil S."/>
            <person name="Pearson D."/>
            <person name="Quail M.A."/>
            <person name="Rabbinowitsch E."/>
            <person name="Rutherford K.M."/>
            <person name="Rutter S."/>
            <person name="Saunders D."/>
            <person name="Seeger K."/>
            <person name="Sharp S."/>
            <person name="Skelton J."/>
            <person name="Simmonds M.N."/>
            <person name="Squares R."/>
            <person name="Squares S."/>
            <person name="Stevens K."/>
            <person name="Taylor K."/>
            <person name="Taylor R.G."/>
            <person name="Tivey A."/>
            <person name="Walsh S.V."/>
            <person name="Warren T."/>
            <person name="Whitehead S."/>
            <person name="Woodward J.R."/>
            <person name="Volckaert G."/>
            <person name="Aert R."/>
            <person name="Robben J."/>
            <person name="Grymonprez B."/>
            <person name="Weltjens I."/>
            <person name="Vanstreels E."/>
            <person name="Rieger M."/>
            <person name="Schaefer M."/>
            <person name="Mueller-Auer S."/>
            <person name="Gabel C."/>
            <person name="Fuchs M."/>
            <person name="Duesterhoeft A."/>
            <person name="Fritzc C."/>
            <person name="Holzer E."/>
            <person name="Moestl D."/>
            <person name="Hilbert H."/>
            <person name="Borzym K."/>
            <person name="Langer I."/>
            <person name="Beck A."/>
            <person name="Lehrach H."/>
            <person name="Reinhardt R."/>
            <person name="Pohl T.M."/>
            <person name="Eger P."/>
            <person name="Zimmermann W."/>
            <person name="Wedler H."/>
            <person name="Wambutt R."/>
            <person name="Purnelle B."/>
            <person name="Goffeau A."/>
            <person name="Cadieu E."/>
            <person name="Dreano S."/>
            <person name="Gloux S."/>
            <person name="Lelaure V."/>
            <person name="Mottier S."/>
            <person name="Galibert F."/>
            <person name="Aves S.J."/>
            <person name="Xiang Z."/>
            <person name="Hunt C."/>
            <person name="Moore K."/>
            <person name="Hurst S.M."/>
            <person name="Lucas M."/>
            <person name="Rochet M."/>
            <person name="Gaillardin C."/>
            <person name="Tallada V.A."/>
            <person name="Garzon A."/>
            <person name="Thode G."/>
            <person name="Daga R.R."/>
            <person name="Cruzado L."/>
            <person name="Jimenez J."/>
            <person name="Sanchez M."/>
            <person name="del Rey F."/>
            <person name="Benito J."/>
            <person name="Dominguez A."/>
            <person name="Revuelta J.L."/>
            <person name="Moreno S."/>
            <person name="Armstrong J."/>
            <person name="Forsburg S.L."/>
            <person name="Cerutti L."/>
            <person name="Lowe T."/>
            <person name="McCombie W.R."/>
            <person name="Paulsen I."/>
            <person name="Potashkin J."/>
            <person name="Shpakovski G.V."/>
            <person name="Ussery D."/>
            <person name="Barrell B.G."/>
            <person name="Nurse P."/>
        </authorList>
    </citation>
    <scope>NUCLEOTIDE SEQUENCE [LARGE SCALE GENOMIC DNA]</scope>
    <source>
        <strain>972 / ATCC 24843</strain>
    </source>
</reference>
<reference key="2">
    <citation type="journal article" date="2000" name="Genes Cells">
        <title>Large-scale screening of intracellular protein localization in living fission yeast cells by the use of a GFP-fusion genomic DNA library.</title>
        <authorList>
            <person name="Ding D.-Q."/>
            <person name="Tomita Y."/>
            <person name="Yamamoto A."/>
            <person name="Chikashige Y."/>
            <person name="Haraguchi T."/>
            <person name="Hiraoka Y."/>
        </authorList>
    </citation>
    <scope>NUCLEOTIDE SEQUENCE [LARGE SCALE GENOMIC DNA] OF 100-278</scope>
    <scope>SUBCELLULAR LOCATION</scope>
    <source>
        <strain>ATCC 38364 / 968</strain>
    </source>
</reference>
<reference key="3">
    <citation type="journal article" date="2008" name="J. Proteome Res.">
        <title>Phosphoproteome analysis of fission yeast.</title>
        <authorList>
            <person name="Wilson-Grady J.T."/>
            <person name="Villen J."/>
            <person name="Gygi S.P."/>
        </authorList>
    </citation>
    <scope>PHOSPHORYLATION [LARGE SCALE ANALYSIS] AT SER-293; SER-300; SER-313 AND SER-316</scope>
    <scope>IDENTIFICATION BY MASS SPECTROMETRY</scope>
</reference>
<comment type="subunit">
    <text evidence="1">Component of a hexameric 5S RNP precursor complex, composed of 5S RNA, rrs1, rpf2, rpl5a/rpl5b, rpl11a/rpl11b and syo1; this complex acts as a precursor for ribosome assembly.</text>
</comment>
<comment type="subcellular location">
    <subcellularLocation>
        <location evidence="4">Nucleus</location>
        <location evidence="4">Nucleolus</location>
    </subcellularLocation>
</comment>
<comment type="similarity">
    <text evidence="6">Belongs to the RPF2 family.</text>
</comment>
<comment type="sequence caution" evidence="6">
    <conflict type="frameshift">
        <sequence resource="EMBL-CDS" id="BAA87188"/>
    </conflict>
</comment>
<name>RPF2_SCHPO</name>
<dbReference type="EMBL" id="CU329670">
    <property type="protein sequence ID" value="CAB54156.1"/>
    <property type="molecule type" value="Genomic_DNA"/>
</dbReference>
<dbReference type="EMBL" id="AB027884">
    <property type="protein sequence ID" value="BAA87188.1"/>
    <property type="status" value="ALT_FRAME"/>
    <property type="molecule type" value="Genomic_DNA"/>
</dbReference>
<dbReference type="PIR" id="T39206">
    <property type="entry name" value="T39206"/>
</dbReference>
<dbReference type="SMR" id="Q9UUG1"/>
<dbReference type="BioGRID" id="279918">
    <property type="interactions" value="15"/>
</dbReference>
<dbReference type="FunCoup" id="Q9UUG1">
    <property type="interactions" value="588"/>
</dbReference>
<dbReference type="STRING" id="284812.Q9UUG1"/>
<dbReference type="iPTMnet" id="Q9UUG1"/>
<dbReference type="PaxDb" id="4896-SPAC926.08c.1"/>
<dbReference type="EnsemblFungi" id="SPAC926.08c.1">
    <property type="protein sequence ID" value="SPAC926.08c.1:pep"/>
    <property type="gene ID" value="SPAC926.08c"/>
</dbReference>
<dbReference type="KEGG" id="spo:2543500"/>
<dbReference type="PomBase" id="SPAC926.08c"/>
<dbReference type="VEuPathDB" id="FungiDB:SPAC926.08c"/>
<dbReference type="eggNOG" id="KOG3031">
    <property type="taxonomic scope" value="Eukaryota"/>
</dbReference>
<dbReference type="HOGENOM" id="CLU_049783_0_0_1"/>
<dbReference type="InParanoid" id="Q9UUG1"/>
<dbReference type="OMA" id="VGLKPMF"/>
<dbReference type="PhylomeDB" id="Q9UUG1"/>
<dbReference type="PRO" id="PR:Q9UUG1"/>
<dbReference type="Proteomes" id="UP000002485">
    <property type="component" value="Chromosome I"/>
</dbReference>
<dbReference type="GO" id="GO:0005829">
    <property type="term" value="C:cytosol"/>
    <property type="evidence" value="ECO:0007005"/>
    <property type="project" value="PomBase"/>
</dbReference>
<dbReference type="GO" id="GO:0005730">
    <property type="term" value="C:nucleolus"/>
    <property type="evidence" value="ECO:0007005"/>
    <property type="project" value="PomBase"/>
</dbReference>
<dbReference type="GO" id="GO:0005634">
    <property type="term" value="C:nucleus"/>
    <property type="evidence" value="ECO:0007005"/>
    <property type="project" value="PomBase"/>
</dbReference>
<dbReference type="GO" id="GO:0005732">
    <property type="term" value="C:sno(s)RNA-containing ribonucleoprotein complex"/>
    <property type="evidence" value="ECO:0000250"/>
    <property type="project" value="PomBase"/>
</dbReference>
<dbReference type="GO" id="GO:0019843">
    <property type="term" value="F:rRNA binding"/>
    <property type="evidence" value="ECO:0000318"/>
    <property type="project" value="GO_Central"/>
</dbReference>
<dbReference type="GO" id="GO:1902626">
    <property type="term" value="P:assembly of large subunit precursor of preribosome"/>
    <property type="evidence" value="ECO:0000250"/>
    <property type="project" value="PomBase"/>
</dbReference>
<dbReference type="GO" id="GO:0000463">
    <property type="term" value="P:maturation of LSU-rRNA from tricistronic rRNA transcript (SSU-rRNA, 5.8S rRNA, LSU-rRNA)"/>
    <property type="evidence" value="ECO:0000318"/>
    <property type="project" value="GO_Central"/>
</dbReference>
<dbReference type="GO" id="GO:0042273">
    <property type="term" value="P:ribosomal large subunit biogenesis"/>
    <property type="evidence" value="ECO:0000353"/>
    <property type="project" value="PomBase"/>
</dbReference>
<dbReference type="InterPro" id="IPR007109">
    <property type="entry name" value="Brix"/>
</dbReference>
<dbReference type="InterPro" id="IPR039770">
    <property type="entry name" value="Rpf2"/>
</dbReference>
<dbReference type="PANTHER" id="PTHR12728">
    <property type="entry name" value="BRIX DOMAIN CONTAINING PROTEIN"/>
    <property type="match status" value="1"/>
</dbReference>
<dbReference type="PANTHER" id="PTHR12728:SF0">
    <property type="entry name" value="RIBOSOME PRODUCTION FACTOR 2 HOMOLOG"/>
    <property type="match status" value="1"/>
</dbReference>
<dbReference type="Pfam" id="PF04427">
    <property type="entry name" value="Brix"/>
    <property type="match status" value="1"/>
</dbReference>
<dbReference type="SMART" id="SM00879">
    <property type="entry name" value="Brix"/>
    <property type="match status" value="1"/>
</dbReference>
<dbReference type="PROSITE" id="PS50833">
    <property type="entry name" value="BRIX"/>
    <property type="match status" value="1"/>
</dbReference>